<reference key="1">
    <citation type="journal article" date="2004" name="Nat. Genet.">
        <title>Complete sequencing and characterization of 21,243 full-length human cDNAs.</title>
        <authorList>
            <person name="Ota T."/>
            <person name="Suzuki Y."/>
            <person name="Nishikawa T."/>
            <person name="Otsuki T."/>
            <person name="Sugiyama T."/>
            <person name="Irie R."/>
            <person name="Wakamatsu A."/>
            <person name="Hayashi K."/>
            <person name="Sato H."/>
            <person name="Nagai K."/>
            <person name="Kimura K."/>
            <person name="Makita H."/>
            <person name="Sekine M."/>
            <person name="Obayashi M."/>
            <person name="Nishi T."/>
            <person name="Shibahara T."/>
            <person name="Tanaka T."/>
            <person name="Ishii S."/>
            <person name="Yamamoto J."/>
            <person name="Saito K."/>
            <person name="Kawai Y."/>
            <person name="Isono Y."/>
            <person name="Nakamura Y."/>
            <person name="Nagahari K."/>
            <person name="Murakami K."/>
            <person name="Yasuda T."/>
            <person name="Iwayanagi T."/>
            <person name="Wagatsuma M."/>
            <person name="Shiratori A."/>
            <person name="Sudo H."/>
            <person name="Hosoiri T."/>
            <person name="Kaku Y."/>
            <person name="Kodaira H."/>
            <person name="Kondo H."/>
            <person name="Sugawara M."/>
            <person name="Takahashi M."/>
            <person name="Kanda K."/>
            <person name="Yokoi T."/>
            <person name="Furuya T."/>
            <person name="Kikkawa E."/>
            <person name="Omura Y."/>
            <person name="Abe K."/>
            <person name="Kamihara K."/>
            <person name="Katsuta N."/>
            <person name="Sato K."/>
            <person name="Tanikawa M."/>
            <person name="Yamazaki M."/>
            <person name="Ninomiya K."/>
            <person name="Ishibashi T."/>
            <person name="Yamashita H."/>
            <person name="Murakawa K."/>
            <person name="Fujimori K."/>
            <person name="Tanai H."/>
            <person name="Kimata M."/>
            <person name="Watanabe M."/>
            <person name="Hiraoka S."/>
            <person name="Chiba Y."/>
            <person name="Ishida S."/>
            <person name="Ono Y."/>
            <person name="Takiguchi S."/>
            <person name="Watanabe S."/>
            <person name="Yosida M."/>
            <person name="Hotuta T."/>
            <person name="Kusano J."/>
            <person name="Kanehori K."/>
            <person name="Takahashi-Fujii A."/>
            <person name="Hara H."/>
            <person name="Tanase T.-O."/>
            <person name="Nomura Y."/>
            <person name="Togiya S."/>
            <person name="Komai F."/>
            <person name="Hara R."/>
            <person name="Takeuchi K."/>
            <person name="Arita M."/>
            <person name="Imose N."/>
            <person name="Musashino K."/>
            <person name="Yuuki H."/>
            <person name="Oshima A."/>
            <person name="Sasaki N."/>
            <person name="Aotsuka S."/>
            <person name="Yoshikawa Y."/>
            <person name="Matsunawa H."/>
            <person name="Ichihara T."/>
            <person name="Shiohata N."/>
            <person name="Sano S."/>
            <person name="Moriya S."/>
            <person name="Momiyama H."/>
            <person name="Satoh N."/>
            <person name="Takami S."/>
            <person name="Terashima Y."/>
            <person name="Suzuki O."/>
            <person name="Nakagawa S."/>
            <person name="Senoh A."/>
            <person name="Mizoguchi H."/>
            <person name="Goto Y."/>
            <person name="Shimizu F."/>
            <person name="Wakebe H."/>
            <person name="Hishigaki H."/>
            <person name="Watanabe T."/>
            <person name="Sugiyama A."/>
            <person name="Takemoto M."/>
            <person name="Kawakami B."/>
            <person name="Yamazaki M."/>
            <person name="Watanabe K."/>
            <person name="Kumagai A."/>
            <person name="Itakura S."/>
            <person name="Fukuzumi Y."/>
            <person name="Fujimori Y."/>
            <person name="Komiyama M."/>
            <person name="Tashiro H."/>
            <person name="Tanigami A."/>
            <person name="Fujiwara T."/>
            <person name="Ono T."/>
            <person name="Yamada K."/>
            <person name="Fujii Y."/>
            <person name="Ozaki K."/>
            <person name="Hirao M."/>
            <person name="Ohmori Y."/>
            <person name="Kawabata A."/>
            <person name="Hikiji T."/>
            <person name="Kobatake N."/>
            <person name="Inagaki H."/>
            <person name="Ikema Y."/>
            <person name="Okamoto S."/>
            <person name="Okitani R."/>
            <person name="Kawakami T."/>
            <person name="Noguchi S."/>
            <person name="Itoh T."/>
            <person name="Shigeta K."/>
            <person name="Senba T."/>
            <person name="Matsumura K."/>
            <person name="Nakajima Y."/>
            <person name="Mizuno T."/>
            <person name="Morinaga M."/>
            <person name="Sasaki M."/>
            <person name="Togashi T."/>
            <person name="Oyama M."/>
            <person name="Hata H."/>
            <person name="Watanabe M."/>
            <person name="Komatsu T."/>
            <person name="Mizushima-Sugano J."/>
            <person name="Satoh T."/>
            <person name="Shirai Y."/>
            <person name="Takahashi Y."/>
            <person name="Nakagawa K."/>
            <person name="Okumura K."/>
            <person name="Nagase T."/>
            <person name="Nomura N."/>
            <person name="Kikuchi H."/>
            <person name="Masuho Y."/>
            <person name="Yamashita R."/>
            <person name="Nakai K."/>
            <person name="Yada T."/>
            <person name="Nakamura Y."/>
            <person name="Ohara O."/>
            <person name="Isogai T."/>
            <person name="Sugano S."/>
        </authorList>
    </citation>
    <scope>NUCLEOTIDE SEQUENCE [LARGE SCALE MRNA] (ISOFORMS 1 AND 2)</scope>
    <source>
        <tissue>Colon</tissue>
        <tissue>Small intestine</tissue>
    </source>
</reference>
<reference key="2">
    <citation type="journal article" date="2004" name="Nature">
        <title>DNA sequence and analysis of human chromosome 9.</title>
        <authorList>
            <person name="Humphray S.J."/>
            <person name="Oliver K."/>
            <person name="Hunt A.R."/>
            <person name="Plumb R.W."/>
            <person name="Loveland J.E."/>
            <person name="Howe K.L."/>
            <person name="Andrews T.D."/>
            <person name="Searle S."/>
            <person name="Hunt S.E."/>
            <person name="Scott C.E."/>
            <person name="Jones M.C."/>
            <person name="Ainscough R."/>
            <person name="Almeida J.P."/>
            <person name="Ambrose K.D."/>
            <person name="Ashwell R.I.S."/>
            <person name="Babbage A.K."/>
            <person name="Babbage S."/>
            <person name="Bagguley C.L."/>
            <person name="Bailey J."/>
            <person name="Banerjee R."/>
            <person name="Barker D.J."/>
            <person name="Barlow K.F."/>
            <person name="Bates K."/>
            <person name="Beasley H."/>
            <person name="Beasley O."/>
            <person name="Bird C.P."/>
            <person name="Bray-Allen S."/>
            <person name="Brown A.J."/>
            <person name="Brown J.Y."/>
            <person name="Burford D."/>
            <person name="Burrill W."/>
            <person name="Burton J."/>
            <person name="Carder C."/>
            <person name="Carter N.P."/>
            <person name="Chapman J.C."/>
            <person name="Chen Y."/>
            <person name="Clarke G."/>
            <person name="Clark S.Y."/>
            <person name="Clee C.M."/>
            <person name="Clegg S."/>
            <person name="Collier R.E."/>
            <person name="Corby N."/>
            <person name="Crosier M."/>
            <person name="Cummings A.T."/>
            <person name="Davies J."/>
            <person name="Dhami P."/>
            <person name="Dunn M."/>
            <person name="Dutta I."/>
            <person name="Dyer L.W."/>
            <person name="Earthrowl M.E."/>
            <person name="Faulkner L."/>
            <person name="Fleming C.J."/>
            <person name="Frankish A."/>
            <person name="Frankland J.A."/>
            <person name="French L."/>
            <person name="Fricker D.G."/>
            <person name="Garner P."/>
            <person name="Garnett J."/>
            <person name="Ghori J."/>
            <person name="Gilbert J.G.R."/>
            <person name="Glison C."/>
            <person name="Grafham D.V."/>
            <person name="Gribble S."/>
            <person name="Griffiths C."/>
            <person name="Griffiths-Jones S."/>
            <person name="Grocock R."/>
            <person name="Guy J."/>
            <person name="Hall R.E."/>
            <person name="Hammond S."/>
            <person name="Harley J.L."/>
            <person name="Harrison E.S.I."/>
            <person name="Hart E.A."/>
            <person name="Heath P.D."/>
            <person name="Henderson C.D."/>
            <person name="Hopkins B.L."/>
            <person name="Howard P.J."/>
            <person name="Howden P.J."/>
            <person name="Huckle E."/>
            <person name="Johnson C."/>
            <person name="Johnson D."/>
            <person name="Joy A.A."/>
            <person name="Kay M."/>
            <person name="Keenan S."/>
            <person name="Kershaw J.K."/>
            <person name="Kimberley A.M."/>
            <person name="King A."/>
            <person name="Knights A."/>
            <person name="Laird G.K."/>
            <person name="Langford C."/>
            <person name="Lawlor S."/>
            <person name="Leongamornlert D.A."/>
            <person name="Leversha M."/>
            <person name="Lloyd C."/>
            <person name="Lloyd D.M."/>
            <person name="Lovell J."/>
            <person name="Martin S."/>
            <person name="Mashreghi-Mohammadi M."/>
            <person name="Matthews L."/>
            <person name="McLaren S."/>
            <person name="McLay K.E."/>
            <person name="McMurray A."/>
            <person name="Milne S."/>
            <person name="Nickerson T."/>
            <person name="Nisbett J."/>
            <person name="Nordsiek G."/>
            <person name="Pearce A.V."/>
            <person name="Peck A.I."/>
            <person name="Porter K.M."/>
            <person name="Pandian R."/>
            <person name="Pelan S."/>
            <person name="Phillimore B."/>
            <person name="Povey S."/>
            <person name="Ramsey Y."/>
            <person name="Rand V."/>
            <person name="Scharfe M."/>
            <person name="Sehra H.K."/>
            <person name="Shownkeen R."/>
            <person name="Sims S.K."/>
            <person name="Skuce C.D."/>
            <person name="Smith M."/>
            <person name="Steward C.A."/>
            <person name="Swarbreck D."/>
            <person name="Sycamore N."/>
            <person name="Tester J."/>
            <person name="Thorpe A."/>
            <person name="Tracey A."/>
            <person name="Tromans A."/>
            <person name="Thomas D.W."/>
            <person name="Wall M."/>
            <person name="Wallis J.M."/>
            <person name="West A.P."/>
            <person name="Whitehead S.L."/>
            <person name="Willey D.L."/>
            <person name="Williams S.A."/>
            <person name="Wilming L."/>
            <person name="Wray P.W."/>
            <person name="Young L."/>
            <person name="Ashurst J.L."/>
            <person name="Coulson A."/>
            <person name="Blocker H."/>
            <person name="Durbin R.M."/>
            <person name="Sulston J.E."/>
            <person name="Hubbard T."/>
            <person name="Jackson M.J."/>
            <person name="Bentley D.R."/>
            <person name="Beck S."/>
            <person name="Rogers J."/>
            <person name="Dunham I."/>
        </authorList>
    </citation>
    <scope>NUCLEOTIDE SEQUENCE [LARGE SCALE GENOMIC DNA]</scope>
</reference>
<reference key="3">
    <citation type="submission" date="2005-07" db="EMBL/GenBank/DDBJ databases">
        <authorList>
            <person name="Mural R.J."/>
            <person name="Istrail S."/>
            <person name="Sutton G.G."/>
            <person name="Florea L."/>
            <person name="Halpern A.L."/>
            <person name="Mobarry C.M."/>
            <person name="Lippert R."/>
            <person name="Walenz B."/>
            <person name="Shatkay H."/>
            <person name="Dew I."/>
            <person name="Miller J.R."/>
            <person name="Flanigan M.J."/>
            <person name="Edwards N.J."/>
            <person name="Bolanos R."/>
            <person name="Fasulo D."/>
            <person name="Halldorsson B.V."/>
            <person name="Hannenhalli S."/>
            <person name="Turner R."/>
            <person name="Yooseph S."/>
            <person name="Lu F."/>
            <person name="Nusskern D.R."/>
            <person name="Shue B.C."/>
            <person name="Zheng X.H."/>
            <person name="Zhong F."/>
            <person name="Delcher A.L."/>
            <person name="Huson D.H."/>
            <person name="Kravitz S.A."/>
            <person name="Mouchard L."/>
            <person name="Reinert K."/>
            <person name="Remington K.A."/>
            <person name="Clark A.G."/>
            <person name="Waterman M.S."/>
            <person name="Eichler E.E."/>
            <person name="Adams M.D."/>
            <person name="Hunkapiller M.W."/>
            <person name="Myers E.W."/>
            <person name="Venter J.C."/>
        </authorList>
    </citation>
    <scope>NUCLEOTIDE SEQUENCE [LARGE SCALE GENOMIC DNA]</scope>
</reference>
<reference key="4">
    <citation type="journal article" date="2004" name="Genome Res.">
        <title>The status, quality, and expansion of the NIH full-length cDNA project: the Mammalian Gene Collection (MGC).</title>
        <authorList>
            <consortium name="The MGC Project Team"/>
        </authorList>
    </citation>
    <scope>NUCLEOTIDE SEQUENCE [LARGE SCALE MRNA] (ISOFORM 1)</scope>
    <source>
        <tissue>Brain</tissue>
    </source>
</reference>
<reference key="5">
    <citation type="journal article" date="2006" name="Circ. Res.">
        <title>Embryonic growth-associated protein is one subunit of a novel N-terminal acetyltransferase complex essential for embryonic vascular development.</title>
        <authorList>
            <person name="Wenzlau J.M."/>
            <person name="Garl P.J."/>
            <person name="Simpson P."/>
            <person name="Stenmark K.R."/>
            <person name="West J."/>
            <person name="Artinger K.B."/>
            <person name="Nemenoff R.A."/>
            <person name="Weiser-Evans M.C.M."/>
        </authorList>
    </citation>
    <scope>IDENTIFICATION</scope>
</reference>
<reference key="6">
    <citation type="journal article" date="2009" name="BMC Proc.">
        <title>A synopsis of eukaryotic Nalpha-terminal acetyltransferases: nomenclature, subunits and substrates.</title>
        <authorList>
            <person name="Polevoda B."/>
            <person name="Arnesen T."/>
            <person name="Sherman F."/>
        </authorList>
    </citation>
    <scope>NOMENCLATURE</scope>
</reference>
<reference key="7">
    <citation type="journal article" date="2009" name="Mol. Cell. Biol.">
        <title>Knockdown of human N alpha-terminal acetyltransferase complex C leads to p53-dependent apoptosis and aberrant human Arl8b localization.</title>
        <authorList>
            <person name="Starheim K.K."/>
            <person name="Gromyko D."/>
            <person name="Evjenth R."/>
            <person name="Ryningen A."/>
            <person name="Varhaug J.E."/>
            <person name="Lillehaug J.R."/>
            <person name="Arnesen T."/>
        </authorList>
    </citation>
    <scope>FUNCTION IN APOPTOSIS</scope>
    <scope>IDENTIFICATION IN NATC COMPLEX</scope>
    <scope>SUBCELLULAR LOCATION</scope>
</reference>
<reference key="8">
    <citation type="journal article" date="2011" name="BMC Syst. Biol.">
        <title>Initial characterization of the human central proteome.</title>
        <authorList>
            <person name="Burkard T.R."/>
            <person name="Planyavsky M."/>
            <person name="Kaupe I."/>
            <person name="Breitwieser F.P."/>
            <person name="Buerckstuemmer T."/>
            <person name="Bennett K.L."/>
            <person name="Superti-Furga G."/>
            <person name="Colinge J."/>
        </authorList>
    </citation>
    <scope>IDENTIFICATION BY MASS SPECTROMETRY [LARGE SCALE ANALYSIS]</scope>
</reference>
<reference key="9">
    <citation type="journal article" date="2013" name="J. Proteome Res.">
        <title>Toward a comprehensive characterization of a human cancer cell phosphoproteome.</title>
        <authorList>
            <person name="Zhou H."/>
            <person name="Di Palma S."/>
            <person name="Preisinger C."/>
            <person name="Peng M."/>
            <person name="Polat A.N."/>
            <person name="Heck A.J."/>
            <person name="Mohammed S."/>
        </authorList>
    </citation>
    <scope>PHOSPHORYLATION [LARGE SCALE ANALYSIS] AT SER-187</scope>
    <scope>IDENTIFICATION BY MASS SPECTROMETRY [LARGE SCALE ANALYSIS]</scope>
    <source>
        <tissue>Erythroleukemia</tissue>
    </source>
</reference>
<reference key="10">
    <citation type="journal article" date="2023" name="Nat. Commun.">
        <title>N-terminal acetylation shields proteins from degradation and promotes age-dependent motility and longevity.</title>
        <authorList>
            <person name="Varland S."/>
            <person name="Silva R.D."/>
            <person name="Kjosaas I."/>
            <person name="Faustino A."/>
            <person name="Bogaert A."/>
            <person name="Billmann M."/>
            <person name="Boukhatmi H."/>
            <person name="Kellen B."/>
            <person name="Costanzo M."/>
            <person name="Drazic A."/>
            <person name="Osberg C."/>
            <person name="Chan K."/>
            <person name="Zhang X."/>
            <person name="Tong A.H.Y."/>
            <person name="Andreazza S."/>
            <person name="Lee J.J."/>
            <person name="Nedyalkova L."/>
            <person name="Usaj M."/>
            <person name="Whitworth A.J."/>
            <person name="Andrews B.J."/>
            <person name="Moffat J."/>
            <person name="Myers C.L."/>
            <person name="Gevaert K."/>
            <person name="Boone C."/>
            <person name="Martinho R.G."/>
            <person name="Arnesen T."/>
        </authorList>
    </citation>
    <scope>FUNCTION</scope>
</reference>
<keyword id="KW-0002">3D-structure</keyword>
<keyword id="KW-0025">Alternative splicing</keyword>
<keyword id="KW-0963">Cytoplasm</keyword>
<keyword id="KW-0597">Phosphoprotein</keyword>
<keyword id="KW-1267">Proteomics identification</keyword>
<keyword id="KW-1185">Reference proteome</keyword>
<dbReference type="EMBL" id="AK025266">
    <property type="protein sequence ID" value="BAB15097.1"/>
    <property type="status" value="ALT_FRAME"/>
    <property type="molecule type" value="mRNA"/>
</dbReference>
<dbReference type="EMBL" id="AK026296">
    <property type="protein sequence ID" value="BAB15435.1"/>
    <property type="status" value="ALT_INIT"/>
    <property type="molecule type" value="mRNA"/>
</dbReference>
<dbReference type="EMBL" id="AK056059">
    <property type="protein sequence ID" value="BAG51612.1"/>
    <property type="molecule type" value="mRNA"/>
</dbReference>
<dbReference type="EMBL" id="AL161447">
    <property type="status" value="NOT_ANNOTATED_CDS"/>
    <property type="molecule type" value="Genomic_DNA"/>
</dbReference>
<dbReference type="EMBL" id="AL353743">
    <property type="status" value="NOT_ANNOTATED_CDS"/>
    <property type="molecule type" value="Genomic_DNA"/>
</dbReference>
<dbReference type="EMBL" id="AL161453">
    <property type="status" value="NOT_ANNOTATED_CDS"/>
    <property type="molecule type" value="Genomic_DNA"/>
</dbReference>
<dbReference type="EMBL" id="CH471089">
    <property type="protein sequence ID" value="EAW62702.1"/>
    <property type="molecule type" value="Genomic_DNA"/>
</dbReference>
<dbReference type="EMBL" id="CH471089">
    <property type="protein sequence ID" value="EAW62703.1"/>
    <property type="molecule type" value="Genomic_DNA"/>
</dbReference>
<dbReference type="EMBL" id="BC117427">
    <property type="protein sequence ID" value="AAI17428.1"/>
    <property type="molecule type" value="mRNA"/>
</dbReference>
<dbReference type="EMBL" id="BC117429">
    <property type="protein sequence ID" value="AAI17430.1"/>
    <property type="molecule type" value="mRNA"/>
</dbReference>
<dbReference type="CCDS" id="CCDS6673.1">
    <molecule id="Q5VZE5-1"/>
</dbReference>
<dbReference type="RefSeq" id="NP_001308810.1">
    <molecule id="Q5VZE5-1"/>
    <property type="nucleotide sequence ID" value="NM_001321881.2"/>
</dbReference>
<dbReference type="RefSeq" id="NP_001308811.1">
    <molecule id="Q5VZE5-1"/>
    <property type="nucleotide sequence ID" value="NM_001321882.2"/>
</dbReference>
<dbReference type="RefSeq" id="NP_078911.3">
    <molecule id="Q5VZE5-1"/>
    <property type="nucleotide sequence ID" value="NM_024635.3"/>
</dbReference>
<dbReference type="RefSeq" id="XP_005252184.1">
    <molecule id="Q5VZE5-1"/>
    <property type="nucleotide sequence ID" value="XM_005252127.5"/>
</dbReference>
<dbReference type="RefSeq" id="XP_054219478.1">
    <molecule id="Q5VZE5-1"/>
    <property type="nucleotide sequence ID" value="XM_054363503.1"/>
</dbReference>
<dbReference type="PDB" id="7MX2">
    <property type="method" value="EM"/>
    <property type="resolution" value="3.64 A"/>
    <property type="chains" value="B=1-725"/>
</dbReference>
<dbReference type="PDB" id="7RB3">
    <property type="method" value="EM"/>
    <property type="resolution" value="3.10 A"/>
    <property type="chains" value="B=28-725"/>
</dbReference>
<dbReference type="PDBsum" id="7MX2"/>
<dbReference type="PDBsum" id="7RB3"/>
<dbReference type="EMDB" id="EMD-24070"/>
<dbReference type="EMDB" id="EMD-24393"/>
<dbReference type="SMR" id="Q5VZE5"/>
<dbReference type="BioGRID" id="121941">
    <property type="interactions" value="52"/>
</dbReference>
<dbReference type="ComplexPortal" id="CPX-6275">
    <property type="entry name" value="NatC N-alpha-acetyltransferase complex"/>
</dbReference>
<dbReference type="CORUM" id="Q5VZE5"/>
<dbReference type="FunCoup" id="Q5VZE5">
    <property type="interactions" value="3914"/>
</dbReference>
<dbReference type="IntAct" id="Q5VZE5">
    <property type="interactions" value="12"/>
</dbReference>
<dbReference type="MINT" id="Q5VZE5"/>
<dbReference type="STRING" id="9606.ENSP00000354972"/>
<dbReference type="GlyGen" id="Q5VZE5">
    <property type="glycosylation" value="2 sites, 1 O-linked glycan (2 sites)"/>
</dbReference>
<dbReference type="iPTMnet" id="Q5VZE5"/>
<dbReference type="MetOSite" id="Q5VZE5"/>
<dbReference type="PhosphoSitePlus" id="Q5VZE5"/>
<dbReference type="BioMuta" id="NAA35"/>
<dbReference type="DMDM" id="74747795"/>
<dbReference type="jPOST" id="Q5VZE5"/>
<dbReference type="MassIVE" id="Q5VZE5"/>
<dbReference type="PaxDb" id="9606-ENSP00000354972"/>
<dbReference type="PeptideAtlas" id="Q5VZE5"/>
<dbReference type="ProteomicsDB" id="65692">
    <molecule id="Q5VZE5-1"/>
</dbReference>
<dbReference type="ProteomicsDB" id="65693"/>
<dbReference type="Pumba" id="Q5VZE5"/>
<dbReference type="Antibodypedia" id="13206">
    <property type="antibodies" value="95 antibodies from 21 providers"/>
</dbReference>
<dbReference type="DNASU" id="60560"/>
<dbReference type="Ensembl" id="ENST00000361671.10">
    <molecule id="Q5VZE5-1"/>
    <property type="protein sequence ID" value="ENSP00000354972.5"/>
    <property type="gene ID" value="ENSG00000135040.16"/>
</dbReference>
<dbReference type="Ensembl" id="ENST00000376040.2">
    <molecule id="Q5VZE5-2"/>
    <property type="protein sequence ID" value="ENSP00000365208.1"/>
    <property type="gene ID" value="ENSG00000135040.16"/>
</dbReference>
<dbReference type="GeneID" id="60560"/>
<dbReference type="KEGG" id="hsa:60560"/>
<dbReference type="MANE-Select" id="ENST00000361671.10">
    <property type="protein sequence ID" value="ENSP00000354972.5"/>
    <property type="RefSeq nucleotide sequence ID" value="NM_024635.4"/>
    <property type="RefSeq protein sequence ID" value="NP_078911.3"/>
</dbReference>
<dbReference type="UCSC" id="uc004aoi.5">
    <molecule id="Q5VZE5-1"/>
    <property type="organism name" value="human"/>
</dbReference>
<dbReference type="AGR" id="HGNC:24340"/>
<dbReference type="CTD" id="60560"/>
<dbReference type="DisGeNET" id="60560"/>
<dbReference type="GeneCards" id="NAA35"/>
<dbReference type="HGNC" id="HGNC:24340">
    <property type="gene designation" value="NAA35"/>
</dbReference>
<dbReference type="HPA" id="ENSG00000135040">
    <property type="expression patterns" value="Low tissue specificity"/>
</dbReference>
<dbReference type="MalaCards" id="NAA35"/>
<dbReference type="MIM" id="619438">
    <property type="type" value="gene"/>
</dbReference>
<dbReference type="neXtProt" id="NX_Q5VZE5"/>
<dbReference type="OpenTargets" id="ENSG00000135040"/>
<dbReference type="PharmGKB" id="PA165585932"/>
<dbReference type="VEuPathDB" id="HostDB:ENSG00000135040"/>
<dbReference type="eggNOG" id="KOG2343">
    <property type="taxonomic scope" value="Eukaryota"/>
</dbReference>
<dbReference type="GeneTree" id="ENSGT00390000002445"/>
<dbReference type="HOGENOM" id="CLU_011757_1_1_1"/>
<dbReference type="InParanoid" id="Q5VZE5"/>
<dbReference type="OMA" id="QMEWIVQ"/>
<dbReference type="OrthoDB" id="269405at2759"/>
<dbReference type="PAN-GO" id="Q5VZE5">
    <property type="GO annotations" value="2 GO annotations based on evolutionary models"/>
</dbReference>
<dbReference type="PhylomeDB" id="Q5VZE5"/>
<dbReference type="TreeFam" id="TF320627"/>
<dbReference type="BioCyc" id="MetaCyc:ENSG00000135040-MONOMER"/>
<dbReference type="PathwayCommons" id="Q5VZE5"/>
<dbReference type="Reactome" id="R-HSA-6811440">
    <property type="pathway name" value="Retrograde transport at the Trans-Golgi-Network"/>
</dbReference>
<dbReference type="SignaLink" id="Q5VZE5"/>
<dbReference type="SIGNOR" id="Q5VZE5"/>
<dbReference type="BioGRID-ORCS" id="60560">
    <property type="hits" value="341 hits in 1172 CRISPR screens"/>
</dbReference>
<dbReference type="ChiTaRS" id="NAA35">
    <property type="organism name" value="human"/>
</dbReference>
<dbReference type="GenomeRNAi" id="60560"/>
<dbReference type="Pharos" id="Q5VZE5">
    <property type="development level" value="Tbio"/>
</dbReference>
<dbReference type="PRO" id="PR:Q5VZE5"/>
<dbReference type="Proteomes" id="UP000005640">
    <property type="component" value="Chromosome 9"/>
</dbReference>
<dbReference type="RNAct" id="Q5VZE5">
    <property type="molecule type" value="protein"/>
</dbReference>
<dbReference type="Bgee" id="ENSG00000135040">
    <property type="expression patterns" value="Expressed in secondary oocyte and 209 other cell types or tissues"/>
</dbReference>
<dbReference type="GO" id="GO:0005737">
    <property type="term" value="C:cytoplasm"/>
    <property type="evidence" value="ECO:0000314"/>
    <property type="project" value="UniProtKB"/>
</dbReference>
<dbReference type="GO" id="GO:0005829">
    <property type="term" value="C:cytosol"/>
    <property type="evidence" value="ECO:0000314"/>
    <property type="project" value="HPA"/>
</dbReference>
<dbReference type="GO" id="GO:0031417">
    <property type="term" value="C:NatC complex"/>
    <property type="evidence" value="ECO:0000314"/>
    <property type="project" value="UniProtKB"/>
</dbReference>
<dbReference type="GO" id="GO:0005654">
    <property type="term" value="C:nucleoplasm"/>
    <property type="evidence" value="ECO:0000314"/>
    <property type="project" value="HPA"/>
</dbReference>
<dbReference type="GO" id="GO:0005886">
    <property type="term" value="C:plasma membrane"/>
    <property type="evidence" value="ECO:0000314"/>
    <property type="project" value="HPA"/>
</dbReference>
<dbReference type="GO" id="GO:0043066">
    <property type="term" value="P:negative regulation of apoptotic process"/>
    <property type="evidence" value="ECO:0000315"/>
    <property type="project" value="UniProtKB"/>
</dbReference>
<dbReference type="GO" id="GO:0048659">
    <property type="term" value="P:smooth muscle cell proliferation"/>
    <property type="evidence" value="ECO:0000250"/>
    <property type="project" value="UniProtKB"/>
</dbReference>
<dbReference type="InterPro" id="IPR007244">
    <property type="entry name" value="Naa35/Mak10"/>
</dbReference>
<dbReference type="PANTHER" id="PTHR21373">
    <property type="entry name" value="GLUCOSE REPRESSIBLE PROTEIN MAK10"/>
    <property type="match status" value="1"/>
</dbReference>
<dbReference type="PANTHER" id="PTHR21373:SF0">
    <property type="entry name" value="N-ALPHA-ACETYLTRANSFERASE 35, NATC AUXILIARY SUBUNIT"/>
    <property type="match status" value="1"/>
</dbReference>
<dbReference type="Pfam" id="PF04112">
    <property type="entry name" value="Mak10"/>
    <property type="match status" value="2"/>
</dbReference>
<evidence type="ECO:0000256" key="1">
    <source>
        <dbReference type="SAM" id="MobiDB-lite"/>
    </source>
</evidence>
<evidence type="ECO:0000269" key="2">
    <source>
    </source>
</evidence>
<evidence type="ECO:0000269" key="3">
    <source>
    </source>
</evidence>
<evidence type="ECO:0000303" key="4">
    <source>
    </source>
</evidence>
<evidence type="ECO:0000305" key="5"/>
<evidence type="ECO:0007744" key="6">
    <source>
    </source>
</evidence>
<evidence type="ECO:0007829" key="7">
    <source>
        <dbReference type="PDB" id="7RB3"/>
    </source>
</evidence>
<gene>
    <name type="primary">NAA35</name>
    <name type="synonym">EGAP</name>
    <name type="synonym">MAK10</name>
</gene>
<accession>Q5VZE5</accession>
<accession>Q5VZE6</accession>
<accession>Q9H631</accession>
<accession>Q9H703</accession>
<protein>
    <recommendedName>
        <fullName>N-alpha-acetyltransferase 35, NatC auxiliary subunit</fullName>
    </recommendedName>
    <alternativeName>
        <fullName>Embryonic growth-associated protein homolog</fullName>
    </alternativeName>
    <alternativeName>
        <fullName>Protein MAK10 homolog</fullName>
    </alternativeName>
</protein>
<sequence>MVMKASVDDDDSGWELSMPEKMEKSNTNWVDITQDFEEACRELKLGELLHDKLFGLFEAMSAIEMMDPKMDAGMIGNQVNRKVLNFEQAIKDGTIKIKDLTLPELIGIMDTCFCCLITWLEGHSLAQTVFTCLYIHNPDFIEDPAMKAFALGILKICDIAREKVNKAAVFEEEDFQSMTYGFKMANSVTDLRVTGMLKDVEDDMQRRVKSTRSRQGEERDPEVELEHQQCLAVFSRVKFTRVLLTVLIAFTKKETSAVAEAQKLMVQAADLLSAIHNSLHHGIQAQNDTTKGDHPIMMGFEPLVNQRLLPPTFPRYAKIIKREEMVNYFARLIDRIKTVCEVVNLTNLHCILDFFCEFSEQSPCVLSRSLLQTTFLVDNKKVFGTHLMQDMVKDALRSFVSPPVLSPKCYLYNNHQAKDCIDSFVTHCVRPFCSLIQIHGHNRARQRDKLGHILEEFATLQDEAEKVDAALHTMLLKQEPQRQHLACLGTWVLYHNLRIMIQYLLSGFELELYSMHEYYYIYWYLSEFLYAWLMSTLSRADGSQMAEERIMEEQQKGRSSKKTKKKKKVRPLSREITMSQAYQNMCAGMFKTMVAFDMDGKVRKPKFELDSEQVRYEHRFAPFNSVMTPPPVHYLQFKEMSDLNKYSPPPQSPELYVAASKHFQQAKMILENIPNPDHEVNRILKVAKPNFVVMKLLAGGHKKESKVPPEFDFSAHKYFPVVKLV</sequence>
<comment type="function">
    <text evidence="2 3">Auxillary component of the N-terminal acetyltransferase C (NatC) complex which catalyzes acetylation of N-terminal methionine residues (PubMed:19398576, PubMed:37891180). N-terminal acetylation protects proteins from ubiquitination and degradation by the N-end rule pathway (PubMed:37891180). Involved in regulation of apoptosis and proliferation of smooth muscle cells (PubMed:19398576).</text>
</comment>
<comment type="subunit">
    <text evidence="2">Component of the N-terminal acetyltransferase C (NatC) complex, which is composed of NAA35, NAA38 and NAA30.</text>
</comment>
<comment type="interaction">
    <interactant intactId="EBI-9106478">
        <id>Q5VZE5</id>
    </interactant>
    <interactant intactId="EBI-9106461">
        <id>Q147X3</id>
        <label>NAA30</label>
    </interactant>
    <organismsDiffer>false</organismsDiffer>
    <experiments>5</experiments>
</comment>
<comment type="interaction">
    <interactant intactId="EBI-9106478">
        <id>Q5VZE5</id>
    </interactant>
    <interactant intactId="EBI-9106509">
        <id>Q9BRA0</id>
        <label>NAA38</label>
    </interactant>
    <organismsDiffer>false</organismsDiffer>
    <experiments>3</experiments>
</comment>
<comment type="interaction">
    <interactant intactId="EBI-9106478">
        <id>Q5VZE5</id>
    </interactant>
    <interactant intactId="EBI-2813981">
        <id>Q9C029</id>
        <label>TRIM7</label>
    </interactant>
    <organismsDiffer>false</organismsDiffer>
    <experiments>3</experiments>
</comment>
<comment type="subcellular location">
    <subcellularLocation>
        <location evidence="2">Cytoplasm</location>
    </subcellularLocation>
</comment>
<comment type="alternative products">
    <event type="alternative splicing"/>
    <isoform>
        <id>Q5VZE5-1</id>
        <name>1</name>
        <sequence type="displayed"/>
    </isoform>
    <isoform>
        <id>Q5VZE5-2</id>
        <name>2</name>
        <sequence type="described" ref="VSP_056098 VSP_056099"/>
    </isoform>
</comment>
<comment type="similarity">
    <text evidence="5">Belongs to the MAK10 family.</text>
</comment>
<comment type="sequence caution" evidence="5">
    <conflict type="frameshift">
        <sequence resource="EMBL-CDS" id="BAB15097"/>
    </conflict>
</comment>
<comment type="sequence caution" evidence="5">
    <conflict type="erroneous initiation">
        <sequence resource="EMBL-CDS" id="BAB15435"/>
    </conflict>
</comment>
<proteinExistence type="evidence at protein level"/>
<feature type="chain" id="PRO_0000308614" description="N-alpha-acetyltransferase 35, NatC auxiliary subunit">
    <location>
        <begin position="1"/>
        <end position="725"/>
    </location>
</feature>
<feature type="region of interest" description="Disordered" evidence="1">
    <location>
        <begin position="548"/>
        <end position="573"/>
    </location>
</feature>
<feature type="compositionally biased region" description="Basic residues" evidence="1">
    <location>
        <begin position="558"/>
        <end position="571"/>
    </location>
</feature>
<feature type="modified residue" description="Phosphoserine" evidence="6">
    <location>
        <position position="187"/>
    </location>
</feature>
<feature type="splice variant" id="VSP_056098" description="In isoform 2." evidence="4">
    <original>DH</original>
    <variation>GL</variation>
    <location>
        <begin position="293"/>
        <end position="294"/>
    </location>
</feature>
<feature type="splice variant" id="VSP_056099" description="In isoform 2." evidence="4">
    <location>
        <begin position="295"/>
        <end position="725"/>
    </location>
</feature>
<feature type="sequence conflict" description="In Ref. 1; BAB15097." evidence="5" ref="1">
    <original>Q</original>
    <variation>R</variation>
    <location>
        <position position="229"/>
    </location>
</feature>
<feature type="sequence conflict" description="In Ref. 1; BAB15097." evidence="5" ref="1">
    <original>C</original>
    <variation>W</variation>
    <location>
        <position position="487"/>
    </location>
</feature>
<feature type="helix" evidence="7">
    <location>
        <begin position="86"/>
        <end position="90"/>
    </location>
</feature>
<feature type="turn" evidence="7">
    <location>
        <begin position="91"/>
        <end position="93"/>
    </location>
</feature>
<feature type="helix" evidence="7">
    <location>
        <begin position="102"/>
        <end position="120"/>
    </location>
</feature>
<feature type="turn" evidence="7">
    <location>
        <begin position="125"/>
        <end position="131"/>
    </location>
</feature>
<feature type="helix" evidence="7">
    <location>
        <begin position="133"/>
        <end position="136"/>
    </location>
</feature>
<feature type="helix" evidence="7">
    <location>
        <begin position="138"/>
        <end position="140"/>
    </location>
</feature>
<feature type="helix" evidence="7">
    <location>
        <begin position="144"/>
        <end position="167"/>
    </location>
</feature>
<feature type="helix" evidence="7">
    <location>
        <begin position="190"/>
        <end position="210"/>
    </location>
</feature>
<feature type="helix" evidence="7">
    <location>
        <begin position="222"/>
        <end position="249"/>
    </location>
</feature>
<feature type="strand" evidence="7">
    <location>
        <begin position="252"/>
        <end position="254"/>
    </location>
</feature>
<feature type="helix" evidence="7">
    <location>
        <begin position="256"/>
        <end position="259"/>
    </location>
</feature>
<feature type="helix" evidence="7">
    <location>
        <begin position="262"/>
        <end position="277"/>
    </location>
</feature>
<feature type="helix" evidence="7">
    <location>
        <begin position="323"/>
        <end position="340"/>
    </location>
</feature>
<feature type="helix" evidence="7">
    <location>
        <begin position="341"/>
        <end position="344"/>
    </location>
</feature>
<feature type="helix" evidence="7">
    <location>
        <begin position="348"/>
        <end position="360"/>
    </location>
</feature>
<feature type="helix" evidence="7">
    <location>
        <begin position="365"/>
        <end position="375"/>
    </location>
</feature>
<feature type="turn" evidence="7">
    <location>
        <begin position="383"/>
        <end position="385"/>
    </location>
</feature>
<feature type="helix" evidence="7">
    <location>
        <begin position="388"/>
        <end position="399"/>
    </location>
</feature>
<feature type="helix" evidence="7">
    <location>
        <begin position="403"/>
        <end position="405"/>
    </location>
</feature>
<feature type="turn" evidence="7">
    <location>
        <begin position="411"/>
        <end position="413"/>
    </location>
</feature>
<feature type="turn" evidence="7">
    <location>
        <begin position="415"/>
        <end position="417"/>
    </location>
</feature>
<feature type="helix" evidence="7">
    <location>
        <begin position="418"/>
        <end position="440"/>
    </location>
</feature>
<feature type="helix" evidence="7">
    <location>
        <begin position="445"/>
        <end position="474"/>
    </location>
</feature>
<feature type="helix" evidence="7">
    <location>
        <begin position="488"/>
        <end position="509"/>
    </location>
</feature>
<feature type="helix" evidence="7">
    <location>
        <begin position="515"/>
        <end position="517"/>
    </location>
</feature>
<feature type="helix" evidence="7">
    <location>
        <begin position="518"/>
        <end position="527"/>
    </location>
</feature>
<feature type="helix" evidence="7">
    <location>
        <begin position="529"/>
        <end position="547"/>
    </location>
</feature>
<feature type="helix" evidence="7">
    <location>
        <begin position="573"/>
        <end position="599"/>
    </location>
</feature>
<feature type="helix" evidence="7">
    <location>
        <begin position="612"/>
        <end position="619"/>
    </location>
</feature>
<feature type="helix" evidence="7">
    <location>
        <begin position="621"/>
        <end position="625"/>
    </location>
</feature>
<feature type="helix" evidence="7">
    <location>
        <begin position="634"/>
        <end position="641"/>
    </location>
</feature>
<feature type="strand" evidence="7">
    <location>
        <begin position="643"/>
        <end position="648"/>
    </location>
</feature>
<feature type="helix" evidence="7">
    <location>
        <begin position="652"/>
        <end position="670"/>
    </location>
</feature>
<feature type="helix" evidence="7">
    <location>
        <begin position="678"/>
        <end position="697"/>
    </location>
</feature>
<feature type="turn" evidence="7">
    <location>
        <begin position="698"/>
        <end position="702"/>
    </location>
</feature>
<feature type="strand" evidence="7">
    <location>
        <begin position="710"/>
        <end position="712"/>
    </location>
</feature>
<feature type="strand" evidence="7">
    <location>
        <begin position="717"/>
        <end position="719"/>
    </location>
</feature>
<feature type="strand" evidence="7">
    <location>
        <begin position="721"/>
        <end position="723"/>
    </location>
</feature>
<organism>
    <name type="scientific">Homo sapiens</name>
    <name type="common">Human</name>
    <dbReference type="NCBI Taxonomy" id="9606"/>
    <lineage>
        <taxon>Eukaryota</taxon>
        <taxon>Metazoa</taxon>
        <taxon>Chordata</taxon>
        <taxon>Craniata</taxon>
        <taxon>Vertebrata</taxon>
        <taxon>Euteleostomi</taxon>
        <taxon>Mammalia</taxon>
        <taxon>Eutheria</taxon>
        <taxon>Euarchontoglires</taxon>
        <taxon>Primates</taxon>
        <taxon>Haplorrhini</taxon>
        <taxon>Catarrhini</taxon>
        <taxon>Hominidae</taxon>
        <taxon>Homo</taxon>
    </lineage>
</organism>
<name>NAA35_HUMAN</name>